<protein>
    <recommendedName>
        <fullName evidence="1">Inorganic pyrophosphatase</fullName>
        <ecNumber evidence="1">3.6.1.1</ecNumber>
    </recommendedName>
    <alternativeName>
        <fullName evidence="1">Pyrophosphate phospho-hydrolase</fullName>
        <shortName evidence="1">PPase</shortName>
    </alternativeName>
</protein>
<keyword id="KW-0963">Cytoplasm</keyword>
<keyword id="KW-0378">Hydrolase</keyword>
<keyword id="KW-0460">Magnesium</keyword>
<keyword id="KW-0479">Metal-binding</keyword>
<dbReference type="EC" id="3.6.1.1" evidence="1"/>
<dbReference type="EMBL" id="BA000037">
    <property type="protein sequence ID" value="BAC93196.1"/>
    <property type="molecule type" value="Genomic_DNA"/>
</dbReference>
<dbReference type="RefSeq" id="WP_011078784.1">
    <property type="nucleotide sequence ID" value="NC_005139.1"/>
</dbReference>
<dbReference type="SMR" id="Q7MPD2"/>
<dbReference type="STRING" id="672.VV93_v1c03990"/>
<dbReference type="KEGG" id="vvy:VV0432"/>
<dbReference type="PATRIC" id="fig|196600.6.peg.460"/>
<dbReference type="eggNOG" id="COG0221">
    <property type="taxonomic scope" value="Bacteria"/>
</dbReference>
<dbReference type="HOGENOM" id="CLU_073198_1_0_6"/>
<dbReference type="Proteomes" id="UP000002675">
    <property type="component" value="Chromosome I"/>
</dbReference>
<dbReference type="GO" id="GO:0005737">
    <property type="term" value="C:cytoplasm"/>
    <property type="evidence" value="ECO:0007669"/>
    <property type="project" value="UniProtKB-SubCell"/>
</dbReference>
<dbReference type="GO" id="GO:0004427">
    <property type="term" value="F:inorganic diphosphate phosphatase activity"/>
    <property type="evidence" value="ECO:0007669"/>
    <property type="project" value="UniProtKB-UniRule"/>
</dbReference>
<dbReference type="GO" id="GO:0000287">
    <property type="term" value="F:magnesium ion binding"/>
    <property type="evidence" value="ECO:0007669"/>
    <property type="project" value="UniProtKB-UniRule"/>
</dbReference>
<dbReference type="GO" id="GO:0006796">
    <property type="term" value="P:phosphate-containing compound metabolic process"/>
    <property type="evidence" value="ECO:0007669"/>
    <property type="project" value="InterPro"/>
</dbReference>
<dbReference type="CDD" id="cd00412">
    <property type="entry name" value="pyrophosphatase"/>
    <property type="match status" value="1"/>
</dbReference>
<dbReference type="FunFam" id="3.90.80.10:FF:000001">
    <property type="entry name" value="Inorganic pyrophosphatase"/>
    <property type="match status" value="1"/>
</dbReference>
<dbReference type="Gene3D" id="3.90.80.10">
    <property type="entry name" value="Inorganic pyrophosphatase"/>
    <property type="match status" value="1"/>
</dbReference>
<dbReference type="HAMAP" id="MF_00209">
    <property type="entry name" value="Inorganic_PPase"/>
    <property type="match status" value="1"/>
</dbReference>
<dbReference type="InterPro" id="IPR008162">
    <property type="entry name" value="Pyrophosphatase"/>
</dbReference>
<dbReference type="InterPro" id="IPR036649">
    <property type="entry name" value="Pyrophosphatase_sf"/>
</dbReference>
<dbReference type="NCBIfam" id="NF002317">
    <property type="entry name" value="PRK01250.1"/>
    <property type="match status" value="1"/>
</dbReference>
<dbReference type="PANTHER" id="PTHR10286">
    <property type="entry name" value="INORGANIC PYROPHOSPHATASE"/>
    <property type="match status" value="1"/>
</dbReference>
<dbReference type="Pfam" id="PF00719">
    <property type="entry name" value="Pyrophosphatase"/>
    <property type="match status" value="1"/>
</dbReference>
<dbReference type="SUPFAM" id="SSF50324">
    <property type="entry name" value="Inorganic pyrophosphatase"/>
    <property type="match status" value="1"/>
</dbReference>
<dbReference type="PROSITE" id="PS00387">
    <property type="entry name" value="PPASE"/>
    <property type="match status" value="1"/>
</dbReference>
<gene>
    <name evidence="1" type="primary">ppa</name>
    <name type="ordered locus">VV0432</name>
</gene>
<comment type="function">
    <text evidence="1">Catalyzes the hydrolysis of inorganic pyrophosphate (PPi) forming two phosphate ions.</text>
</comment>
<comment type="catalytic activity">
    <reaction evidence="1">
        <text>diphosphate + H2O = 2 phosphate + H(+)</text>
        <dbReference type="Rhea" id="RHEA:24576"/>
        <dbReference type="ChEBI" id="CHEBI:15377"/>
        <dbReference type="ChEBI" id="CHEBI:15378"/>
        <dbReference type="ChEBI" id="CHEBI:33019"/>
        <dbReference type="ChEBI" id="CHEBI:43474"/>
        <dbReference type="EC" id="3.6.1.1"/>
    </reaction>
</comment>
<comment type="cofactor">
    <cofactor evidence="1">
        <name>Mg(2+)</name>
        <dbReference type="ChEBI" id="CHEBI:18420"/>
    </cofactor>
</comment>
<comment type="subunit">
    <text evidence="1">Homohexamer.</text>
</comment>
<comment type="subcellular location">
    <subcellularLocation>
        <location evidence="1">Cytoplasm</location>
    </subcellularLocation>
</comment>
<comment type="similarity">
    <text evidence="1">Belongs to the PPase family.</text>
</comment>
<name>IPYR_VIBVY</name>
<proteinExistence type="inferred from homology"/>
<evidence type="ECO:0000255" key="1">
    <source>
        <dbReference type="HAMAP-Rule" id="MF_00209"/>
    </source>
</evidence>
<sequence>MSLNNVPAGKSLPDDLYVVIEIPANADPIKYEVDKESGAVFVDRFMSAPMFYPCNYGYVNHTLSLDGDPVDVLVPTPYPLMPGSVIRCRPVGVLKMTDESGEDAKVVAVPHSKLSKEYDHIQDVNDLPELLKAQITHFFERYKELESGKWVKVDGWEDVEAARKEILDSYQRAQNK</sequence>
<reference key="1">
    <citation type="journal article" date="2003" name="Genome Res.">
        <title>Comparative genome analysis of Vibrio vulnificus, a marine pathogen.</title>
        <authorList>
            <person name="Chen C.-Y."/>
            <person name="Wu K.-M."/>
            <person name="Chang Y.-C."/>
            <person name="Chang C.-H."/>
            <person name="Tsai H.-C."/>
            <person name="Liao T.-L."/>
            <person name="Liu Y.-M."/>
            <person name="Chen H.-J."/>
            <person name="Shen A.B.-T."/>
            <person name="Li J.-C."/>
            <person name="Su T.-L."/>
            <person name="Shao C.-P."/>
            <person name="Lee C.-T."/>
            <person name="Hor L.-I."/>
            <person name="Tsai S.-F."/>
        </authorList>
    </citation>
    <scope>NUCLEOTIDE SEQUENCE [LARGE SCALE GENOMIC DNA]</scope>
    <source>
        <strain>YJ016</strain>
    </source>
</reference>
<organism>
    <name type="scientific">Vibrio vulnificus (strain YJ016)</name>
    <dbReference type="NCBI Taxonomy" id="196600"/>
    <lineage>
        <taxon>Bacteria</taxon>
        <taxon>Pseudomonadati</taxon>
        <taxon>Pseudomonadota</taxon>
        <taxon>Gammaproteobacteria</taxon>
        <taxon>Vibrionales</taxon>
        <taxon>Vibrionaceae</taxon>
        <taxon>Vibrio</taxon>
    </lineage>
</organism>
<accession>Q7MPD2</accession>
<feature type="chain" id="PRO_0000137540" description="Inorganic pyrophosphatase">
    <location>
        <begin position="1"/>
        <end position="176"/>
    </location>
</feature>
<feature type="binding site" evidence="1">
    <location>
        <position position="30"/>
    </location>
    <ligand>
        <name>substrate</name>
    </ligand>
</feature>
<feature type="binding site" evidence="1">
    <location>
        <position position="44"/>
    </location>
    <ligand>
        <name>substrate</name>
    </ligand>
</feature>
<feature type="binding site" evidence="1">
    <location>
        <position position="56"/>
    </location>
    <ligand>
        <name>substrate</name>
    </ligand>
</feature>
<feature type="binding site" evidence="1">
    <location>
        <position position="66"/>
    </location>
    <ligand>
        <name>Mg(2+)</name>
        <dbReference type="ChEBI" id="CHEBI:18420"/>
        <label>1</label>
    </ligand>
</feature>
<feature type="binding site" evidence="1">
    <location>
        <position position="71"/>
    </location>
    <ligand>
        <name>Mg(2+)</name>
        <dbReference type="ChEBI" id="CHEBI:18420"/>
        <label>1</label>
    </ligand>
</feature>
<feature type="binding site" evidence="1">
    <location>
        <position position="71"/>
    </location>
    <ligand>
        <name>Mg(2+)</name>
        <dbReference type="ChEBI" id="CHEBI:18420"/>
        <label>2</label>
    </ligand>
</feature>
<feature type="binding site" evidence="1">
    <location>
        <position position="103"/>
    </location>
    <ligand>
        <name>Mg(2+)</name>
        <dbReference type="ChEBI" id="CHEBI:18420"/>
        <label>1</label>
    </ligand>
</feature>
<feature type="binding site" evidence="1">
    <location>
        <position position="142"/>
    </location>
    <ligand>
        <name>substrate</name>
    </ligand>
</feature>